<gene>
    <name evidence="2" type="primary">fusA</name>
    <name type="ordered locus">SE_0311</name>
</gene>
<sequence length="693" mass="76877">MARDFSLKNTRNIGIMAHIDAGKTTTTERILYYTGRIHKIGETHEGASQMDWMEQEQDRGITITSAATTAQWQGHRVNIIDTPGHVDFTVEVERSLRVLDGAVTVLDAQSGVEPQTETVWRQATTYGVPRIVFVNKMDKLGANFEYSVSTLHDRLQANAAPIQLPIGAEDEFEAIIDLVEMKCFKYTNDLGTEIDEIEIPEDHKERAEEARAQLIEAVAENNDDLMEKYLGDEEISVDELKDAIRQATTDVEFYPVLCGTAFKNKGVQLMLNAVIDYLPSPLDVKPIIGHRANNPDEEVVAKPDDSAEFAALAFKVMTDPYVGKLTFFRVYSGTLSSGSYVKNSSKDKRERVGRLLQMHANSRQEIDTVYSGEIAAAVGLKETGTGDTLCGEKNDIILESMEFPEPVIHLSVEPKSKADQDKMTQALVKLQEEDPTFHAHTDEETGQVIIGGMGELHLDILVDRMKKEFNVECNVGAPMVSYRETFKQPAQVQGKFSRQSGGRGQYGDVHIEFTPNETGGGFEFENAIVGGVVPREYIPSVEQGLKDAMENGVLAGYPLIDVKAKLFDGSYHDVDSSEMAFKIAASLALKEAAKKCDPVILEPMMKVTIEMPEEYMGDIMGDVTARRGRVDGMEPRGNAQVVNAYVPLSEMFGYATSLRSNTQGRGTYTMYFDHYAEVPKSIAEEIIKKNKGE</sequence>
<evidence type="ECO:0000250" key="1"/>
<evidence type="ECO:0000255" key="2">
    <source>
        <dbReference type="HAMAP-Rule" id="MF_00054"/>
    </source>
</evidence>
<comment type="function">
    <text evidence="2">Catalyzes the GTP-dependent ribosomal translocation step during translation elongation. During this step, the ribosome changes from the pre-translocational (PRE) to the post-translocational (POST) state as the newly formed A-site-bound peptidyl-tRNA and P-site-bound deacylated tRNA move to the P and E sites, respectively. Catalyzes the coordinated movement of the two tRNA molecules, the mRNA and conformational changes in the ribosome.</text>
</comment>
<comment type="subcellular location">
    <subcellularLocation>
        <location evidence="2">Cytoplasm</location>
    </subcellularLocation>
</comment>
<comment type="similarity">
    <text evidence="2">Belongs to the TRAFAC class translation factor GTPase superfamily. Classic translation factor GTPase family. EF-G/EF-2 subfamily.</text>
</comment>
<accession>Q8CQ82</accession>
<protein>
    <recommendedName>
        <fullName evidence="2">Elongation factor G</fullName>
        <shortName evidence="2">EF-G</shortName>
    </recommendedName>
</protein>
<keyword id="KW-0963">Cytoplasm</keyword>
<keyword id="KW-0251">Elongation factor</keyword>
<keyword id="KW-0342">GTP-binding</keyword>
<keyword id="KW-0547">Nucleotide-binding</keyword>
<keyword id="KW-0648">Protein biosynthesis</keyword>
<organism>
    <name type="scientific">Staphylococcus epidermidis (strain ATCC 12228 / FDA PCI 1200)</name>
    <dbReference type="NCBI Taxonomy" id="176280"/>
    <lineage>
        <taxon>Bacteria</taxon>
        <taxon>Bacillati</taxon>
        <taxon>Bacillota</taxon>
        <taxon>Bacilli</taxon>
        <taxon>Bacillales</taxon>
        <taxon>Staphylococcaceae</taxon>
        <taxon>Staphylococcus</taxon>
    </lineage>
</organism>
<feature type="initiator methionine" description="Removed" evidence="1">
    <location>
        <position position="1"/>
    </location>
</feature>
<feature type="chain" id="PRO_0000091221" description="Elongation factor G">
    <location>
        <begin position="2"/>
        <end position="693"/>
    </location>
</feature>
<feature type="domain" description="tr-type G">
    <location>
        <begin position="8"/>
        <end position="282"/>
    </location>
</feature>
<feature type="binding site" evidence="2">
    <location>
        <begin position="17"/>
        <end position="24"/>
    </location>
    <ligand>
        <name>GTP</name>
        <dbReference type="ChEBI" id="CHEBI:37565"/>
    </ligand>
</feature>
<feature type="binding site" evidence="2">
    <location>
        <begin position="81"/>
        <end position="85"/>
    </location>
    <ligand>
        <name>GTP</name>
        <dbReference type="ChEBI" id="CHEBI:37565"/>
    </ligand>
</feature>
<feature type="binding site" evidence="2">
    <location>
        <begin position="135"/>
        <end position="138"/>
    </location>
    <ligand>
        <name>GTP</name>
        <dbReference type="ChEBI" id="CHEBI:37565"/>
    </ligand>
</feature>
<reference key="1">
    <citation type="journal article" date="2003" name="Mol. Microbiol.">
        <title>Genome-based analysis of virulence genes in a non-biofilm-forming Staphylococcus epidermidis strain (ATCC 12228).</title>
        <authorList>
            <person name="Zhang Y.-Q."/>
            <person name="Ren S.-X."/>
            <person name="Li H.-L."/>
            <person name="Wang Y.-X."/>
            <person name="Fu G."/>
            <person name="Yang J."/>
            <person name="Qin Z.-Q."/>
            <person name="Miao Y.-G."/>
            <person name="Wang W.-Y."/>
            <person name="Chen R.-S."/>
            <person name="Shen Y."/>
            <person name="Chen Z."/>
            <person name="Yuan Z.-H."/>
            <person name="Zhao G.-P."/>
            <person name="Qu D."/>
            <person name="Danchin A."/>
            <person name="Wen Y.-M."/>
        </authorList>
    </citation>
    <scope>NUCLEOTIDE SEQUENCE [LARGE SCALE GENOMIC DNA]</scope>
    <source>
        <strain>ATCC 12228 / FDA PCI 1200</strain>
    </source>
</reference>
<proteinExistence type="inferred from homology"/>
<dbReference type="EMBL" id="AE015929">
    <property type="protein sequence ID" value="AAO03908.1"/>
    <property type="molecule type" value="Genomic_DNA"/>
</dbReference>
<dbReference type="RefSeq" id="NP_763866.1">
    <property type="nucleotide sequence ID" value="NC_004461.1"/>
</dbReference>
<dbReference type="RefSeq" id="WP_001832287.1">
    <property type="nucleotide sequence ID" value="NZ_WBME01000014.1"/>
</dbReference>
<dbReference type="SMR" id="Q8CQ82"/>
<dbReference type="GeneID" id="50019524"/>
<dbReference type="KEGG" id="sep:SE_0311"/>
<dbReference type="PATRIC" id="fig|176280.10.peg.286"/>
<dbReference type="eggNOG" id="COG0480">
    <property type="taxonomic scope" value="Bacteria"/>
</dbReference>
<dbReference type="HOGENOM" id="CLU_002794_4_1_9"/>
<dbReference type="OrthoDB" id="9804431at2"/>
<dbReference type="Proteomes" id="UP000001411">
    <property type="component" value="Chromosome"/>
</dbReference>
<dbReference type="GO" id="GO:0005737">
    <property type="term" value="C:cytoplasm"/>
    <property type="evidence" value="ECO:0007669"/>
    <property type="project" value="UniProtKB-SubCell"/>
</dbReference>
<dbReference type="GO" id="GO:0005525">
    <property type="term" value="F:GTP binding"/>
    <property type="evidence" value="ECO:0007669"/>
    <property type="project" value="UniProtKB-UniRule"/>
</dbReference>
<dbReference type="GO" id="GO:0003924">
    <property type="term" value="F:GTPase activity"/>
    <property type="evidence" value="ECO:0007669"/>
    <property type="project" value="InterPro"/>
</dbReference>
<dbReference type="GO" id="GO:0003746">
    <property type="term" value="F:translation elongation factor activity"/>
    <property type="evidence" value="ECO:0007669"/>
    <property type="project" value="UniProtKB-UniRule"/>
</dbReference>
<dbReference type="GO" id="GO:0032790">
    <property type="term" value="P:ribosome disassembly"/>
    <property type="evidence" value="ECO:0007669"/>
    <property type="project" value="TreeGrafter"/>
</dbReference>
<dbReference type="CDD" id="cd01886">
    <property type="entry name" value="EF-G"/>
    <property type="match status" value="1"/>
</dbReference>
<dbReference type="CDD" id="cd16262">
    <property type="entry name" value="EFG_III"/>
    <property type="match status" value="1"/>
</dbReference>
<dbReference type="CDD" id="cd01434">
    <property type="entry name" value="EFG_mtEFG1_IV"/>
    <property type="match status" value="1"/>
</dbReference>
<dbReference type="CDD" id="cd03713">
    <property type="entry name" value="EFG_mtEFG_C"/>
    <property type="match status" value="1"/>
</dbReference>
<dbReference type="CDD" id="cd04088">
    <property type="entry name" value="EFG_mtEFG_II"/>
    <property type="match status" value="1"/>
</dbReference>
<dbReference type="FunFam" id="2.40.30.10:FF:000006">
    <property type="entry name" value="Elongation factor G"/>
    <property type="match status" value="1"/>
</dbReference>
<dbReference type="FunFam" id="3.30.230.10:FF:000003">
    <property type="entry name" value="Elongation factor G"/>
    <property type="match status" value="1"/>
</dbReference>
<dbReference type="FunFam" id="3.30.70.240:FF:000001">
    <property type="entry name" value="Elongation factor G"/>
    <property type="match status" value="1"/>
</dbReference>
<dbReference type="FunFam" id="3.30.70.870:FF:000001">
    <property type="entry name" value="Elongation factor G"/>
    <property type="match status" value="1"/>
</dbReference>
<dbReference type="FunFam" id="3.40.50.300:FF:000029">
    <property type="entry name" value="Elongation factor G"/>
    <property type="match status" value="1"/>
</dbReference>
<dbReference type="Gene3D" id="3.30.230.10">
    <property type="match status" value="1"/>
</dbReference>
<dbReference type="Gene3D" id="3.30.70.240">
    <property type="match status" value="1"/>
</dbReference>
<dbReference type="Gene3D" id="3.30.70.870">
    <property type="entry name" value="Elongation Factor G (Translational Gtpase), domain 3"/>
    <property type="match status" value="1"/>
</dbReference>
<dbReference type="Gene3D" id="3.40.50.300">
    <property type="entry name" value="P-loop containing nucleotide triphosphate hydrolases"/>
    <property type="match status" value="1"/>
</dbReference>
<dbReference type="Gene3D" id="2.40.30.10">
    <property type="entry name" value="Translation factors"/>
    <property type="match status" value="1"/>
</dbReference>
<dbReference type="HAMAP" id="MF_00054_B">
    <property type="entry name" value="EF_G_EF_2_B"/>
    <property type="match status" value="1"/>
</dbReference>
<dbReference type="InterPro" id="IPR053905">
    <property type="entry name" value="EF-G-like_DII"/>
</dbReference>
<dbReference type="InterPro" id="IPR041095">
    <property type="entry name" value="EFG_II"/>
</dbReference>
<dbReference type="InterPro" id="IPR009022">
    <property type="entry name" value="EFG_III"/>
</dbReference>
<dbReference type="InterPro" id="IPR035647">
    <property type="entry name" value="EFG_III/V"/>
</dbReference>
<dbReference type="InterPro" id="IPR047872">
    <property type="entry name" value="EFG_IV"/>
</dbReference>
<dbReference type="InterPro" id="IPR035649">
    <property type="entry name" value="EFG_V"/>
</dbReference>
<dbReference type="InterPro" id="IPR000640">
    <property type="entry name" value="EFG_V-like"/>
</dbReference>
<dbReference type="InterPro" id="IPR031157">
    <property type="entry name" value="G_TR_CS"/>
</dbReference>
<dbReference type="InterPro" id="IPR027417">
    <property type="entry name" value="P-loop_NTPase"/>
</dbReference>
<dbReference type="InterPro" id="IPR020568">
    <property type="entry name" value="Ribosomal_Su5_D2-typ_SF"/>
</dbReference>
<dbReference type="InterPro" id="IPR014721">
    <property type="entry name" value="Ribsml_uS5_D2-typ_fold_subgr"/>
</dbReference>
<dbReference type="InterPro" id="IPR005225">
    <property type="entry name" value="Small_GTP-bd"/>
</dbReference>
<dbReference type="InterPro" id="IPR000795">
    <property type="entry name" value="T_Tr_GTP-bd_dom"/>
</dbReference>
<dbReference type="InterPro" id="IPR009000">
    <property type="entry name" value="Transl_B-barrel_sf"/>
</dbReference>
<dbReference type="InterPro" id="IPR004540">
    <property type="entry name" value="Transl_elong_EFG/EF2"/>
</dbReference>
<dbReference type="InterPro" id="IPR005517">
    <property type="entry name" value="Transl_elong_EFG/EF2_IV"/>
</dbReference>
<dbReference type="NCBIfam" id="TIGR00484">
    <property type="entry name" value="EF-G"/>
    <property type="match status" value="1"/>
</dbReference>
<dbReference type="NCBIfam" id="NF009379">
    <property type="entry name" value="PRK12740.1-3"/>
    <property type="match status" value="1"/>
</dbReference>
<dbReference type="NCBIfam" id="NF009381">
    <property type="entry name" value="PRK12740.1-5"/>
    <property type="match status" value="1"/>
</dbReference>
<dbReference type="NCBIfam" id="TIGR00231">
    <property type="entry name" value="small_GTP"/>
    <property type="match status" value="1"/>
</dbReference>
<dbReference type="PANTHER" id="PTHR43261:SF1">
    <property type="entry name" value="RIBOSOME-RELEASING FACTOR 2, MITOCHONDRIAL"/>
    <property type="match status" value="1"/>
</dbReference>
<dbReference type="PANTHER" id="PTHR43261">
    <property type="entry name" value="TRANSLATION ELONGATION FACTOR G-RELATED"/>
    <property type="match status" value="1"/>
</dbReference>
<dbReference type="Pfam" id="PF22042">
    <property type="entry name" value="EF-G_D2"/>
    <property type="match status" value="1"/>
</dbReference>
<dbReference type="Pfam" id="PF00679">
    <property type="entry name" value="EFG_C"/>
    <property type="match status" value="1"/>
</dbReference>
<dbReference type="Pfam" id="PF14492">
    <property type="entry name" value="EFG_III"/>
    <property type="match status" value="1"/>
</dbReference>
<dbReference type="Pfam" id="PF03764">
    <property type="entry name" value="EFG_IV"/>
    <property type="match status" value="1"/>
</dbReference>
<dbReference type="Pfam" id="PF00009">
    <property type="entry name" value="GTP_EFTU"/>
    <property type="match status" value="1"/>
</dbReference>
<dbReference type="PRINTS" id="PR00315">
    <property type="entry name" value="ELONGATNFCT"/>
</dbReference>
<dbReference type="SMART" id="SM00838">
    <property type="entry name" value="EFG_C"/>
    <property type="match status" value="1"/>
</dbReference>
<dbReference type="SMART" id="SM00889">
    <property type="entry name" value="EFG_IV"/>
    <property type="match status" value="1"/>
</dbReference>
<dbReference type="SUPFAM" id="SSF54980">
    <property type="entry name" value="EF-G C-terminal domain-like"/>
    <property type="match status" value="2"/>
</dbReference>
<dbReference type="SUPFAM" id="SSF52540">
    <property type="entry name" value="P-loop containing nucleoside triphosphate hydrolases"/>
    <property type="match status" value="1"/>
</dbReference>
<dbReference type="SUPFAM" id="SSF54211">
    <property type="entry name" value="Ribosomal protein S5 domain 2-like"/>
    <property type="match status" value="1"/>
</dbReference>
<dbReference type="SUPFAM" id="SSF50447">
    <property type="entry name" value="Translation proteins"/>
    <property type="match status" value="1"/>
</dbReference>
<dbReference type="PROSITE" id="PS00301">
    <property type="entry name" value="G_TR_1"/>
    <property type="match status" value="1"/>
</dbReference>
<dbReference type="PROSITE" id="PS51722">
    <property type="entry name" value="G_TR_2"/>
    <property type="match status" value="1"/>
</dbReference>
<name>EFG_STAES</name>